<evidence type="ECO:0000250" key="1">
    <source>
        <dbReference type="UniProtKB" id="A1D8I8"/>
    </source>
</evidence>
<evidence type="ECO:0000250" key="2">
    <source>
        <dbReference type="UniProtKB" id="F2S700"/>
    </source>
</evidence>
<evidence type="ECO:0000303" key="3">
    <source>
    </source>
</evidence>
<evidence type="ECO:0000305" key="4"/>
<evidence type="ECO:0000305" key="5">
    <source>
    </source>
</evidence>
<evidence type="ECO:0000305" key="6">
    <source>
    </source>
</evidence>
<keyword id="KW-1185">Reference proteome</keyword>
<keyword id="KW-0808">Transferase</keyword>
<protein>
    <recommendedName>
        <fullName evidence="3">Prenyltransferase nscD</fullName>
        <ecNumber evidence="6">2.5.1.-</ecNumber>
    </recommendedName>
    <alternativeName>
        <fullName evidence="3">Neosartoricin B biosynthesis protein D</fullName>
    </alternativeName>
</protein>
<sequence>MSSLPMFDSVSRFLPTANEDEQFWWKLTGRHMARMMHEAGYPEDRQVECLLFHRFKVVPCLGPRPHSDKPWYKSRVGGGAADGCPINYSWRFGTSDRKPHIRNFIEPLGALTNTPADPLNEVATKALLRDYSMTLPNVDLELFWTFAPHYRPRIIEKADMEKLAGASLLVGAEMSPDSRNIDIKAYMYPRVPSQTSQLLTTILPQAMRDAYGEDVCLDSLNLVRDFMTNDPEGSQLTLTGTTGIDCCKLQDTRVKIYVITRNTSFDHIAAIMTLGGRRPISEELLNQLRALWFELKGAPADFTSSEQLPAQTKPDGTKNPIVVPFYFDIQPRLALPDVKAYVDVSTSPVSDLAAAEAVVRHLERHGSGQNPKAYMNVLQDITPVEELETRKGALAFYSIAVKKNELDITSYFNPQVYKRYFAHEVQLNGQRRSAFE</sequence>
<gene>
    <name evidence="3" type="primary">nscD</name>
    <name type="ORF">MCYG_03599</name>
</gene>
<accession>C5FM58</accession>
<feature type="chain" id="PRO_0000437916" description="Prenyltransferase nscD">
    <location>
        <begin position="1"/>
        <end position="436"/>
    </location>
</feature>
<reference key="1">
    <citation type="journal article" date="2012" name="MBio">
        <title>Comparative genome analysis of Trichophyton rubrum and related dermatophytes reveals candidate genes involved in infection.</title>
        <authorList>
            <person name="Martinez D.A."/>
            <person name="Oliver B.G."/>
            <person name="Graeser Y."/>
            <person name="Goldberg J.M."/>
            <person name="Li W."/>
            <person name="Martinez-Rossi N.M."/>
            <person name="Monod M."/>
            <person name="Shelest E."/>
            <person name="Barton R.C."/>
            <person name="Birch E."/>
            <person name="Brakhage A.A."/>
            <person name="Chen Z."/>
            <person name="Gurr S.J."/>
            <person name="Heiman D."/>
            <person name="Heitman J."/>
            <person name="Kosti I."/>
            <person name="Rossi A."/>
            <person name="Saif S."/>
            <person name="Samalova M."/>
            <person name="Saunders C.W."/>
            <person name="Shea T."/>
            <person name="Summerbell R.C."/>
            <person name="Xu J."/>
            <person name="Young S."/>
            <person name="Zeng Q."/>
            <person name="Birren B.W."/>
            <person name="Cuomo C.A."/>
            <person name="White T.C."/>
        </authorList>
    </citation>
    <scope>NUCLEOTIDE SEQUENCE [LARGE SCALE GENOMIC DNA]</scope>
    <source>
        <strain>ATCC MYA-4605 / CBS 113480</strain>
    </source>
</reference>
<reference key="2">
    <citation type="journal article" date="2013" name="ACS Synth. Biol.">
        <title>Discovery of cryptic polyketide metabolites from dermatophytes using heterologous expression in Aspergillus nidulans.</title>
        <authorList>
            <person name="Yin W.B."/>
            <person name="Chooi Y.H."/>
            <person name="Smith A.R."/>
            <person name="Cacho R.A."/>
            <person name="Hu Y."/>
            <person name="White T.C."/>
            <person name="Tang Y."/>
        </authorList>
    </citation>
    <scope>FUNCTION</scope>
</reference>
<reference key="3">
    <citation type="journal article" date="2013" name="Org. Lett.">
        <title>Genome mining of a prenylated and immunosuppressive polyketide from pathogenic fungi.</title>
        <authorList>
            <person name="Chooi Y.H."/>
            <person name="Fang J."/>
            <person name="Liu H."/>
            <person name="Filler S.G."/>
            <person name="Wang P."/>
            <person name="Tang Y."/>
        </authorList>
    </citation>
    <scope>FUNCTION</scope>
</reference>
<dbReference type="EC" id="2.5.1.-" evidence="6"/>
<dbReference type="EMBL" id="DS995703">
    <property type="protein sequence ID" value="EEQ30780.1"/>
    <property type="molecule type" value="Genomic_DNA"/>
</dbReference>
<dbReference type="RefSeq" id="XP_002848093.1">
    <property type="nucleotide sequence ID" value="XM_002848047.1"/>
</dbReference>
<dbReference type="SMR" id="C5FM58"/>
<dbReference type="STRING" id="554155.C5FM58"/>
<dbReference type="GeneID" id="9229415"/>
<dbReference type="VEuPathDB" id="FungiDB:MCYG_03599"/>
<dbReference type="eggNOG" id="ENOG502S2XP">
    <property type="taxonomic scope" value="Eukaryota"/>
</dbReference>
<dbReference type="HOGENOM" id="CLU_037431_2_2_1"/>
<dbReference type="OMA" id="TGIDCCK"/>
<dbReference type="OrthoDB" id="3354387at2759"/>
<dbReference type="Proteomes" id="UP000002035">
    <property type="component" value="Unassembled WGS sequence"/>
</dbReference>
<dbReference type="GO" id="GO:0004659">
    <property type="term" value="F:prenyltransferase activity"/>
    <property type="evidence" value="ECO:0007669"/>
    <property type="project" value="TreeGrafter"/>
</dbReference>
<dbReference type="GO" id="GO:0009820">
    <property type="term" value="P:alkaloid metabolic process"/>
    <property type="evidence" value="ECO:0007669"/>
    <property type="project" value="InterPro"/>
</dbReference>
<dbReference type="CDD" id="cd13929">
    <property type="entry name" value="PT-DMATS_CymD"/>
    <property type="match status" value="1"/>
</dbReference>
<dbReference type="InterPro" id="IPR033964">
    <property type="entry name" value="Aro_prenylTrfase"/>
</dbReference>
<dbReference type="InterPro" id="IPR017795">
    <property type="entry name" value="Aro_prenylTrfase_DMATS"/>
</dbReference>
<dbReference type="InterPro" id="IPR012148">
    <property type="entry name" value="DMATS-type_fun"/>
</dbReference>
<dbReference type="NCBIfam" id="TIGR03429">
    <property type="entry name" value="arom_pren_DMATS"/>
    <property type="match status" value="1"/>
</dbReference>
<dbReference type="PANTHER" id="PTHR40627">
    <property type="entry name" value="INDOLE PRENYLTRANSFERASE TDIB-RELATED"/>
    <property type="match status" value="1"/>
</dbReference>
<dbReference type="PANTHER" id="PTHR40627:SF4">
    <property type="entry name" value="PRENYLTRANSFERASE ASQH1-RELATED"/>
    <property type="match status" value="1"/>
</dbReference>
<dbReference type="Pfam" id="PF11991">
    <property type="entry name" value="Trp_DMAT"/>
    <property type="match status" value="1"/>
</dbReference>
<dbReference type="PIRSF" id="PIRSF000509">
    <property type="entry name" value="Trp_DMAT"/>
    <property type="match status" value="1"/>
</dbReference>
<dbReference type="SFLD" id="SFLDS00036">
    <property type="entry name" value="Aromatic_Prenyltransferase"/>
    <property type="match status" value="1"/>
</dbReference>
<organism>
    <name type="scientific">Arthroderma otae (strain ATCC MYA-4605 / CBS 113480)</name>
    <name type="common">Microsporum canis</name>
    <dbReference type="NCBI Taxonomy" id="554155"/>
    <lineage>
        <taxon>Eukaryota</taxon>
        <taxon>Fungi</taxon>
        <taxon>Dikarya</taxon>
        <taxon>Ascomycota</taxon>
        <taxon>Pezizomycotina</taxon>
        <taxon>Eurotiomycetes</taxon>
        <taxon>Eurotiomycetidae</taxon>
        <taxon>Onygenales</taxon>
        <taxon>Arthrodermataceae</taxon>
        <taxon>Microsporum</taxon>
    </lineage>
</organism>
<proteinExistence type="inferred from homology"/>
<name>NSCD_ARTOC</name>
<comment type="function">
    <text evidence="1 2 5 6">Prenyltransferase; part of the gene cluster that mediates the biosynthesis of neosartoricin B, a prenylated anthracenone that probably exhibits T-cell antiproliferative activity, suggestive of a physiological role as an immunosuppressive agent (PubMed:23368997, PubMed:23758576). The non-reducing polyketide synthase nscA probably synthesizes and cyclizes the decaketide backbone (By similarity). The hydrolase nscB then mediates the product release through hydrolysis followed by spontaneous decarboxylation (By similarity). The prenyltransferase nscD catalyzes the addition of the dimethylallyl group to the aromatic C5 (By similarity). The FAD-dependent monooxygenase nscC is then responsible for the stereospecific hydroxylation at C2 (By similarity). Neosartoricin B can be converted into two additional compounds neosartoricins C and D (By similarity). Neosartoricin C is a spirocyclic compound that is cyclized through the attack of C3 hydroxyl on C14, followed by dehydration (By similarity). On the other hand, neosartoricin D is a further cyclized compound in which attack of C2 on C14 in neosartoricin C results in the formation of the acetal-containing dioxabicyclo-octanone ring (By similarity). Both of these compounds are novel and possibly represent related metabolites of the gene cluster (By similarity).</text>
</comment>
<comment type="pathway">
    <text evidence="6">Secondary metabolite biosynthesis.</text>
</comment>
<comment type="similarity">
    <text evidence="4">Belongs to the tryptophan dimethylallyltransferase family.</text>
</comment>